<comment type="function">
    <text evidence="5">May be a transcriptional corepressor with KLF4.</text>
</comment>
<comment type="subunit">
    <text evidence="5">Interacts with KLF4.</text>
</comment>
<comment type="subcellular location">
    <subcellularLocation>
        <location evidence="5">Nucleus</location>
    </subcellularLocation>
</comment>
<comment type="tissue specificity">
    <text evidence="4">Strongly expressed in testis and embryonic stem cells.</text>
</comment>
<comment type="developmental stage">
    <text evidence="4 5">In testis, detected in condensing spermatids but not at earlier stages of spermatogenesis (PubMed:11063263). In embryonic stem cells, expressed in undifferentiated cells and down-regulated upon differentiation (PubMed:24161396).</text>
</comment>
<comment type="similarity">
    <text evidence="7">Belongs to the krueppel C2H2-type zinc-finger protein family.</text>
</comment>
<comment type="sequence caution" evidence="7">
    <conflict type="frameshift">
        <sequence resource="EMBL-CDS" id="AAN76749"/>
    </conflict>
</comment>
<comment type="sequence caution" evidence="7">
    <conflict type="frameshift">
        <sequence resource="EMBL-CDS" id="BAB25873"/>
    </conflict>
</comment>
<comment type="sequence caution" evidence="7">
    <conflict type="erroneous initiation">
        <sequence resource="EMBL-CDS" id="CAC18551"/>
    </conflict>
    <text>Truncated N-terminus.</text>
</comment>
<comment type="sequence caution" evidence="7">
    <conflict type="erroneous gene model prediction">
        <sequence resource="EMBL-CDS" id="EDL23160"/>
    </conflict>
</comment>
<proteinExistence type="evidence at protein level"/>
<dbReference type="EMBL" id="AF450095">
    <property type="protein sequence ID" value="AAN76749.1"/>
    <property type="status" value="ALT_FRAME"/>
    <property type="molecule type" value="mRNA"/>
</dbReference>
<dbReference type="EMBL" id="AK008748">
    <property type="protein sequence ID" value="BAB25873.1"/>
    <property type="status" value="ALT_FRAME"/>
    <property type="molecule type" value="mRNA"/>
</dbReference>
<dbReference type="EMBL" id="AC149052">
    <property type="status" value="NOT_ANNOTATED_CDS"/>
    <property type="molecule type" value="Genomic_DNA"/>
</dbReference>
<dbReference type="EMBL" id="CH466639">
    <property type="protein sequence ID" value="EDL23160.1"/>
    <property type="status" value="ALT_SEQ"/>
    <property type="molecule type" value="Genomic_DNA"/>
</dbReference>
<dbReference type="EMBL" id="BC099454">
    <property type="protein sequence ID" value="AAH99454.1"/>
    <property type="molecule type" value="mRNA"/>
</dbReference>
<dbReference type="EMBL" id="AJ278340">
    <property type="protein sequence ID" value="CAC18551.1"/>
    <property type="status" value="ALT_INIT"/>
    <property type="molecule type" value="mRNA"/>
</dbReference>
<dbReference type="CCDS" id="CCDS52060.1"/>
<dbReference type="RefSeq" id="NP_071854.2">
    <property type="nucleotide sequence ID" value="NM_022409.2"/>
</dbReference>
<dbReference type="FunCoup" id="E9Q6W4">
    <property type="interactions" value="826"/>
</dbReference>
<dbReference type="STRING" id="10090.ENSMUSP00000104093"/>
<dbReference type="iPTMnet" id="E9Q6W4"/>
<dbReference type="PhosphoSitePlus" id="E9Q6W4"/>
<dbReference type="PaxDb" id="10090-ENSMUSP00000104093"/>
<dbReference type="PeptideAtlas" id="E9Q6W4"/>
<dbReference type="ProteomicsDB" id="275280"/>
<dbReference type="Antibodypedia" id="17828">
    <property type="antibodies" value="120 antibodies from 19 providers"/>
</dbReference>
<dbReference type="DNASU" id="63872"/>
<dbReference type="Ensembl" id="ENSMUST00000108453.2">
    <property type="protein sequence ID" value="ENSMUSP00000104093.2"/>
    <property type="gene ID" value="ENSMUSG00000011267.9"/>
</dbReference>
<dbReference type="GeneID" id="63872"/>
<dbReference type="KEGG" id="mmu:63872"/>
<dbReference type="UCSC" id="uc009fmj.2">
    <property type="organism name" value="mouse"/>
</dbReference>
<dbReference type="AGR" id="MGI:1926956"/>
<dbReference type="CTD" id="63872"/>
<dbReference type="MGI" id="MGI:1926956">
    <property type="gene designation" value="Zfp296"/>
</dbReference>
<dbReference type="VEuPathDB" id="HostDB:ENSMUSG00000011267"/>
<dbReference type="eggNOG" id="KOG1721">
    <property type="taxonomic scope" value="Eukaryota"/>
</dbReference>
<dbReference type="GeneTree" id="ENSGT00940000160667"/>
<dbReference type="HOGENOM" id="CLU_049038_0_0_1"/>
<dbReference type="InParanoid" id="E9Q6W4"/>
<dbReference type="OMA" id="RNQWALW"/>
<dbReference type="OrthoDB" id="10046198at2759"/>
<dbReference type="PhylomeDB" id="E9Q6W4"/>
<dbReference type="TreeFam" id="TF318131"/>
<dbReference type="BioGRID-ORCS" id="63872">
    <property type="hits" value="0 hits in 79 CRISPR screens"/>
</dbReference>
<dbReference type="ChiTaRS" id="Zfp296">
    <property type="organism name" value="mouse"/>
</dbReference>
<dbReference type="PRO" id="PR:E9Q6W4"/>
<dbReference type="Proteomes" id="UP000000589">
    <property type="component" value="Chromosome 7"/>
</dbReference>
<dbReference type="RNAct" id="E9Q6W4">
    <property type="molecule type" value="protein"/>
</dbReference>
<dbReference type="Bgee" id="ENSMUSG00000011267">
    <property type="expression patterns" value="Expressed in primary oocyte and 78 other cell types or tissues"/>
</dbReference>
<dbReference type="GO" id="GO:0005634">
    <property type="term" value="C:nucleus"/>
    <property type="evidence" value="ECO:0000314"/>
    <property type="project" value="MGI"/>
</dbReference>
<dbReference type="GO" id="GO:1990837">
    <property type="term" value="F:sequence-specific double-stranded DNA binding"/>
    <property type="evidence" value="ECO:0007669"/>
    <property type="project" value="Ensembl"/>
</dbReference>
<dbReference type="GO" id="GO:0008270">
    <property type="term" value="F:zinc ion binding"/>
    <property type="evidence" value="ECO:0007669"/>
    <property type="project" value="UniProtKB-KW"/>
</dbReference>
<dbReference type="GO" id="GO:0000122">
    <property type="term" value="P:negative regulation of transcription by RNA polymerase II"/>
    <property type="evidence" value="ECO:0000314"/>
    <property type="project" value="MGI"/>
</dbReference>
<dbReference type="GO" id="GO:0007283">
    <property type="term" value="P:spermatogenesis"/>
    <property type="evidence" value="ECO:0000270"/>
    <property type="project" value="UniProtKB"/>
</dbReference>
<dbReference type="FunFam" id="3.30.160.60:FF:000055">
    <property type="entry name" value="B-cell lymphoma/leukemia 11A isoform X1"/>
    <property type="match status" value="1"/>
</dbReference>
<dbReference type="FunFam" id="3.30.160.60:FF:000046">
    <property type="entry name" value="Putative B-cell lymphoma/leukemia 11A"/>
    <property type="match status" value="2"/>
</dbReference>
<dbReference type="FunFam" id="3.30.160.60:FF:001546">
    <property type="entry name" value="Zinc finger protein 296"/>
    <property type="match status" value="1"/>
</dbReference>
<dbReference type="Gene3D" id="3.30.160.60">
    <property type="entry name" value="Classic Zinc Finger"/>
    <property type="match status" value="4"/>
</dbReference>
<dbReference type="InterPro" id="IPR051497">
    <property type="entry name" value="Dev/Hematopoietic_TF"/>
</dbReference>
<dbReference type="InterPro" id="IPR036236">
    <property type="entry name" value="Znf_C2H2_sf"/>
</dbReference>
<dbReference type="InterPro" id="IPR013087">
    <property type="entry name" value="Znf_C2H2_type"/>
</dbReference>
<dbReference type="PANTHER" id="PTHR45993">
    <property type="entry name" value="B-CELL LYMPHOMA/LEUKEMIA 11"/>
    <property type="match status" value="1"/>
</dbReference>
<dbReference type="PANTHER" id="PTHR45993:SF2">
    <property type="entry name" value="ZINC FINGER PROTEIN 296"/>
    <property type="match status" value="1"/>
</dbReference>
<dbReference type="Pfam" id="PF25491">
    <property type="entry name" value="CCHC_BCL-11A"/>
    <property type="match status" value="1"/>
</dbReference>
<dbReference type="Pfam" id="PF00096">
    <property type="entry name" value="zf-C2H2"/>
    <property type="match status" value="4"/>
</dbReference>
<dbReference type="SMART" id="SM00355">
    <property type="entry name" value="ZnF_C2H2"/>
    <property type="match status" value="6"/>
</dbReference>
<dbReference type="SUPFAM" id="SSF57667">
    <property type="entry name" value="beta-beta-alpha zinc fingers"/>
    <property type="match status" value="2"/>
</dbReference>
<dbReference type="PROSITE" id="PS00028">
    <property type="entry name" value="ZINC_FINGER_C2H2_1"/>
    <property type="match status" value="6"/>
</dbReference>
<dbReference type="PROSITE" id="PS50157">
    <property type="entry name" value="ZINC_FINGER_C2H2_2"/>
    <property type="match status" value="4"/>
</dbReference>
<name>ZN296_MOUSE</name>
<protein>
    <recommendedName>
        <fullName evidence="13">Zinc finger protein 296</fullName>
    </recommendedName>
    <alternativeName>
        <fullName evidence="6">Hepatocellular carcinoma-associated antigen MHCA108</fullName>
    </alternativeName>
</protein>
<keyword id="KW-1017">Isopeptide bond</keyword>
<keyword id="KW-0479">Metal-binding</keyword>
<keyword id="KW-0539">Nucleus</keyword>
<keyword id="KW-1185">Reference proteome</keyword>
<keyword id="KW-0677">Repeat</keyword>
<keyword id="KW-0804">Transcription</keyword>
<keyword id="KW-0805">Transcription regulation</keyword>
<keyword id="KW-0832">Ubl conjugation</keyword>
<keyword id="KW-0862">Zinc</keyword>
<keyword id="KW-0863">Zinc-finger</keyword>
<organism evidence="14">
    <name type="scientific">Mus musculus</name>
    <name type="common">Mouse</name>
    <dbReference type="NCBI Taxonomy" id="10090"/>
    <lineage>
        <taxon>Eukaryota</taxon>
        <taxon>Metazoa</taxon>
        <taxon>Chordata</taxon>
        <taxon>Craniata</taxon>
        <taxon>Vertebrata</taxon>
        <taxon>Euteleostomi</taxon>
        <taxon>Mammalia</taxon>
        <taxon>Eutheria</taxon>
        <taxon>Euarchontoglires</taxon>
        <taxon>Glires</taxon>
        <taxon>Rodentia</taxon>
        <taxon>Myomorpha</taxon>
        <taxon>Muroidea</taxon>
        <taxon>Muridae</taxon>
        <taxon>Murinae</taxon>
        <taxon>Mus</taxon>
        <taxon>Mus</taxon>
    </lineage>
</organism>
<feature type="chain" id="PRO_0000436774" description="Zinc finger protein 296">
    <location>
        <begin position="1"/>
        <end position="445"/>
    </location>
</feature>
<feature type="zinc finger region" description="C2H2-type 1" evidence="2">
    <location>
        <begin position="138"/>
        <end position="161"/>
    </location>
</feature>
<feature type="zinc finger region" description="C2H2-type 2" evidence="2">
    <location>
        <begin position="212"/>
        <end position="234"/>
    </location>
</feature>
<feature type="zinc finger region" description="C2H2-type 3" evidence="2">
    <location>
        <begin position="240"/>
        <end position="262"/>
    </location>
</feature>
<feature type="zinc finger region" description="C2H2-type 4" evidence="2">
    <location>
        <begin position="360"/>
        <end position="382"/>
    </location>
</feature>
<feature type="zinc finger region" description="C2H2-type 5" evidence="2">
    <location>
        <begin position="388"/>
        <end position="410"/>
    </location>
</feature>
<feature type="zinc finger region" description="C2H2-type 6" evidence="2">
    <location>
        <begin position="418"/>
        <end position="441"/>
    </location>
</feature>
<feature type="region of interest" description="Disordered" evidence="3">
    <location>
        <begin position="1"/>
        <end position="20"/>
    </location>
</feature>
<feature type="region of interest" description="Disordered" evidence="3">
    <location>
        <begin position="62"/>
        <end position="88"/>
    </location>
</feature>
<feature type="region of interest" description="Disordered" evidence="3">
    <location>
        <begin position="256"/>
        <end position="359"/>
    </location>
</feature>
<feature type="compositionally biased region" description="Basic residues" evidence="3">
    <location>
        <begin position="1"/>
        <end position="10"/>
    </location>
</feature>
<feature type="compositionally biased region" description="Polar residues" evidence="3">
    <location>
        <begin position="269"/>
        <end position="278"/>
    </location>
</feature>
<feature type="compositionally biased region" description="Gly residues" evidence="3">
    <location>
        <begin position="320"/>
        <end position="332"/>
    </location>
</feature>
<feature type="compositionally biased region" description="Basic and acidic residues" evidence="3">
    <location>
        <begin position="338"/>
        <end position="351"/>
    </location>
</feature>
<feature type="cross-link" description="Glycyl lysine isopeptide (Lys-Gly) (interchain with G-Cter in SUMO2)" evidence="1">
    <location>
        <position position="31"/>
    </location>
</feature>
<feature type="sequence conflict" description="In Ref. 5; AAH99454." evidence="7" ref="5">
    <original>T</original>
    <variation>I</variation>
    <location>
        <position position="88"/>
    </location>
</feature>
<feature type="sequence conflict" description="In Ref. 1; AAN76749 and 2; BAB25873." evidence="7" ref="1 2">
    <original>L</original>
    <variation>P</variation>
    <location>
        <position position="138"/>
    </location>
</feature>
<gene>
    <name evidence="1" type="primary">Znf296</name>
    <name evidence="13" type="synonym">Zfp296</name>
</gene>
<evidence type="ECO:0000250" key="1">
    <source>
        <dbReference type="UniProtKB" id="Q8WUU4"/>
    </source>
</evidence>
<evidence type="ECO:0000255" key="2">
    <source>
        <dbReference type="PROSITE-ProRule" id="PRU00042"/>
    </source>
</evidence>
<evidence type="ECO:0000256" key="3">
    <source>
        <dbReference type="SAM" id="MobiDB-lite"/>
    </source>
</evidence>
<evidence type="ECO:0000269" key="4">
    <source>
    </source>
</evidence>
<evidence type="ECO:0000269" key="5">
    <source>
    </source>
</evidence>
<evidence type="ECO:0000303" key="6">
    <source ref="1"/>
</evidence>
<evidence type="ECO:0000305" key="7"/>
<evidence type="ECO:0000312" key="8">
    <source>
        <dbReference type="EMBL" id="AAH99454.1"/>
    </source>
</evidence>
<evidence type="ECO:0000312" key="9">
    <source>
        <dbReference type="EMBL" id="AAN76749.1"/>
    </source>
</evidence>
<evidence type="ECO:0000312" key="10">
    <source>
        <dbReference type="EMBL" id="BAB25873.1"/>
    </source>
</evidence>
<evidence type="ECO:0000312" key="11">
    <source>
        <dbReference type="EMBL" id="CAC18551.1"/>
    </source>
</evidence>
<evidence type="ECO:0000312" key="12">
    <source>
        <dbReference type="EMBL" id="EDL23160.1"/>
    </source>
</evidence>
<evidence type="ECO:0000312" key="13">
    <source>
        <dbReference type="MGI" id="MGI:1926956"/>
    </source>
</evidence>
<evidence type="ECO:0000312" key="14">
    <source>
        <dbReference type="Proteomes" id="UP000000589"/>
    </source>
</evidence>
<reference evidence="9" key="1">
    <citation type="submission" date="2001-11" db="EMBL/GenBank/DDBJ databases">
        <title>MHCA108, a mouse hepatocellular carcinoma-associated antigen.</title>
        <authorList>
            <person name="Dong X."/>
            <person name="Su Y."/>
            <person name="Chen W."/>
        </authorList>
    </citation>
    <scope>NUCLEOTIDE SEQUENCE [MRNA]</scope>
    <source>
        <strain evidence="9">BALB/cJ</strain>
    </source>
</reference>
<reference evidence="10" key="2">
    <citation type="journal article" date="2005" name="Science">
        <title>The transcriptional landscape of the mammalian genome.</title>
        <authorList>
            <person name="Carninci P."/>
            <person name="Kasukawa T."/>
            <person name="Katayama S."/>
            <person name="Gough J."/>
            <person name="Frith M.C."/>
            <person name="Maeda N."/>
            <person name="Oyama R."/>
            <person name="Ravasi T."/>
            <person name="Lenhard B."/>
            <person name="Wells C."/>
            <person name="Kodzius R."/>
            <person name="Shimokawa K."/>
            <person name="Bajic V.B."/>
            <person name="Brenner S.E."/>
            <person name="Batalov S."/>
            <person name="Forrest A.R."/>
            <person name="Zavolan M."/>
            <person name="Davis M.J."/>
            <person name="Wilming L.G."/>
            <person name="Aidinis V."/>
            <person name="Allen J.E."/>
            <person name="Ambesi-Impiombato A."/>
            <person name="Apweiler R."/>
            <person name="Aturaliya R.N."/>
            <person name="Bailey T.L."/>
            <person name="Bansal M."/>
            <person name="Baxter L."/>
            <person name="Beisel K.W."/>
            <person name="Bersano T."/>
            <person name="Bono H."/>
            <person name="Chalk A.M."/>
            <person name="Chiu K.P."/>
            <person name="Choudhary V."/>
            <person name="Christoffels A."/>
            <person name="Clutterbuck D.R."/>
            <person name="Crowe M.L."/>
            <person name="Dalla E."/>
            <person name="Dalrymple B.P."/>
            <person name="de Bono B."/>
            <person name="Della Gatta G."/>
            <person name="di Bernardo D."/>
            <person name="Down T."/>
            <person name="Engstrom P."/>
            <person name="Fagiolini M."/>
            <person name="Faulkner G."/>
            <person name="Fletcher C.F."/>
            <person name="Fukushima T."/>
            <person name="Furuno M."/>
            <person name="Futaki S."/>
            <person name="Gariboldi M."/>
            <person name="Georgii-Hemming P."/>
            <person name="Gingeras T.R."/>
            <person name="Gojobori T."/>
            <person name="Green R.E."/>
            <person name="Gustincich S."/>
            <person name="Harbers M."/>
            <person name="Hayashi Y."/>
            <person name="Hensch T.K."/>
            <person name="Hirokawa N."/>
            <person name="Hill D."/>
            <person name="Huminiecki L."/>
            <person name="Iacono M."/>
            <person name="Ikeo K."/>
            <person name="Iwama A."/>
            <person name="Ishikawa T."/>
            <person name="Jakt M."/>
            <person name="Kanapin A."/>
            <person name="Katoh M."/>
            <person name="Kawasawa Y."/>
            <person name="Kelso J."/>
            <person name="Kitamura H."/>
            <person name="Kitano H."/>
            <person name="Kollias G."/>
            <person name="Krishnan S.P."/>
            <person name="Kruger A."/>
            <person name="Kummerfeld S.K."/>
            <person name="Kurochkin I.V."/>
            <person name="Lareau L.F."/>
            <person name="Lazarevic D."/>
            <person name="Lipovich L."/>
            <person name="Liu J."/>
            <person name="Liuni S."/>
            <person name="McWilliam S."/>
            <person name="Madan Babu M."/>
            <person name="Madera M."/>
            <person name="Marchionni L."/>
            <person name="Matsuda H."/>
            <person name="Matsuzawa S."/>
            <person name="Miki H."/>
            <person name="Mignone F."/>
            <person name="Miyake S."/>
            <person name="Morris K."/>
            <person name="Mottagui-Tabar S."/>
            <person name="Mulder N."/>
            <person name="Nakano N."/>
            <person name="Nakauchi H."/>
            <person name="Ng P."/>
            <person name="Nilsson R."/>
            <person name="Nishiguchi S."/>
            <person name="Nishikawa S."/>
            <person name="Nori F."/>
            <person name="Ohara O."/>
            <person name="Okazaki Y."/>
            <person name="Orlando V."/>
            <person name="Pang K.C."/>
            <person name="Pavan W.J."/>
            <person name="Pavesi G."/>
            <person name="Pesole G."/>
            <person name="Petrovsky N."/>
            <person name="Piazza S."/>
            <person name="Reed J."/>
            <person name="Reid J.F."/>
            <person name="Ring B.Z."/>
            <person name="Ringwald M."/>
            <person name="Rost B."/>
            <person name="Ruan Y."/>
            <person name="Salzberg S.L."/>
            <person name="Sandelin A."/>
            <person name="Schneider C."/>
            <person name="Schoenbach C."/>
            <person name="Sekiguchi K."/>
            <person name="Semple C.A."/>
            <person name="Seno S."/>
            <person name="Sessa L."/>
            <person name="Sheng Y."/>
            <person name="Shibata Y."/>
            <person name="Shimada H."/>
            <person name="Shimada K."/>
            <person name="Silva D."/>
            <person name="Sinclair B."/>
            <person name="Sperling S."/>
            <person name="Stupka E."/>
            <person name="Sugiura K."/>
            <person name="Sultana R."/>
            <person name="Takenaka Y."/>
            <person name="Taki K."/>
            <person name="Tammoja K."/>
            <person name="Tan S.L."/>
            <person name="Tang S."/>
            <person name="Taylor M.S."/>
            <person name="Tegner J."/>
            <person name="Teichmann S.A."/>
            <person name="Ueda H.R."/>
            <person name="van Nimwegen E."/>
            <person name="Verardo R."/>
            <person name="Wei C.L."/>
            <person name="Yagi K."/>
            <person name="Yamanishi H."/>
            <person name="Zabarovsky E."/>
            <person name="Zhu S."/>
            <person name="Zimmer A."/>
            <person name="Hide W."/>
            <person name="Bult C."/>
            <person name="Grimmond S.M."/>
            <person name="Teasdale R.D."/>
            <person name="Liu E.T."/>
            <person name="Brusic V."/>
            <person name="Quackenbush J."/>
            <person name="Wahlestedt C."/>
            <person name="Mattick J.S."/>
            <person name="Hume D.A."/>
            <person name="Kai C."/>
            <person name="Sasaki D."/>
            <person name="Tomaru Y."/>
            <person name="Fukuda S."/>
            <person name="Kanamori-Katayama M."/>
            <person name="Suzuki M."/>
            <person name="Aoki J."/>
            <person name="Arakawa T."/>
            <person name="Iida J."/>
            <person name="Imamura K."/>
            <person name="Itoh M."/>
            <person name="Kato T."/>
            <person name="Kawaji H."/>
            <person name="Kawagashira N."/>
            <person name="Kawashima T."/>
            <person name="Kojima M."/>
            <person name="Kondo S."/>
            <person name="Konno H."/>
            <person name="Nakano K."/>
            <person name="Ninomiya N."/>
            <person name="Nishio T."/>
            <person name="Okada M."/>
            <person name="Plessy C."/>
            <person name="Shibata K."/>
            <person name="Shiraki T."/>
            <person name="Suzuki S."/>
            <person name="Tagami M."/>
            <person name="Waki K."/>
            <person name="Watahiki A."/>
            <person name="Okamura-Oho Y."/>
            <person name="Suzuki H."/>
            <person name="Kawai J."/>
            <person name="Hayashizaki Y."/>
        </authorList>
    </citation>
    <scope>NUCLEOTIDE SEQUENCE [LARGE SCALE MRNA]</scope>
    <source>
        <strain evidence="10">C57BL/6J</strain>
        <tissue evidence="10">Stomach</tissue>
    </source>
</reference>
<reference evidence="14" key="3">
    <citation type="journal article" date="2009" name="PLoS Biol.">
        <title>Lineage-specific biology revealed by a finished genome assembly of the mouse.</title>
        <authorList>
            <person name="Church D.M."/>
            <person name="Goodstadt L."/>
            <person name="Hillier L.W."/>
            <person name="Zody M.C."/>
            <person name="Goldstein S."/>
            <person name="She X."/>
            <person name="Bult C.J."/>
            <person name="Agarwala R."/>
            <person name="Cherry J.L."/>
            <person name="DiCuccio M."/>
            <person name="Hlavina W."/>
            <person name="Kapustin Y."/>
            <person name="Meric P."/>
            <person name="Maglott D."/>
            <person name="Birtle Z."/>
            <person name="Marques A.C."/>
            <person name="Graves T."/>
            <person name="Zhou S."/>
            <person name="Teague B."/>
            <person name="Potamousis K."/>
            <person name="Churas C."/>
            <person name="Place M."/>
            <person name="Herschleb J."/>
            <person name="Runnheim R."/>
            <person name="Forrest D."/>
            <person name="Amos-Landgraf J."/>
            <person name="Schwartz D.C."/>
            <person name="Cheng Z."/>
            <person name="Lindblad-Toh K."/>
            <person name="Eichler E.E."/>
            <person name="Ponting C.P."/>
        </authorList>
    </citation>
    <scope>NUCLEOTIDE SEQUENCE [LARGE SCALE GENOMIC DNA]</scope>
    <source>
        <strain evidence="14">C57BL/6J</strain>
    </source>
</reference>
<reference evidence="12" key="4">
    <citation type="submission" date="2005-07" db="EMBL/GenBank/DDBJ databases">
        <authorList>
            <person name="Mural R.J."/>
            <person name="Adams M.D."/>
            <person name="Myers E.W."/>
            <person name="Smith H.O."/>
            <person name="Venter J.C."/>
        </authorList>
    </citation>
    <scope>NUCLEOTIDE SEQUENCE [LARGE SCALE GENOMIC DNA]</scope>
</reference>
<reference evidence="8" key="5">
    <citation type="journal article" date="2004" name="Genome Res.">
        <title>The status, quality, and expansion of the NIH full-length cDNA project: the Mammalian Gene Collection (MGC).</title>
        <authorList>
            <consortium name="The MGC Project Team"/>
        </authorList>
    </citation>
    <scope>NUCLEOTIDE SEQUENCE [LARGE SCALE MRNA]</scope>
    <source>
        <strain evidence="8">C57BL/6J</strain>
        <tissue evidence="8">Oocyte</tissue>
    </source>
</reference>
<reference evidence="11" key="6">
    <citation type="journal article" date="2000" name="Mamm. Genome">
        <title>Cloning, structure, expression analysis, and assignment to mouse chromosome 7 of the gene Zfp296 encoding a zinc finger protein.</title>
        <authorList>
            <person name="Dear T.N."/>
        </authorList>
    </citation>
    <scope>NUCLEOTIDE SEQUENCE [MRNA] OF 83-445</scope>
    <scope>TISSUE SPECIFICITY</scope>
    <scope>DEVELOPMENTAL STAGE</scope>
    <source>
        <strain evidence="11">129</strain>
    </source>
</reference>
<reference evidence="7" key="7">
    <citation type="journal article" date="2013" name="Biochem. Biophys. Res. Commun.">
        <title>Zfp296 is a novel Klf4-interacting protein and functions as a negative regulator.</title>
        <authorList>
            <person name="Fujii Y."/>
            <person name="Kakegawa M."/>
            <person name="Koide H."/>
            <person name="Akagi T."/>
            <person name="Yokota T."/>
        </authorList>
    </citation>
    <scope>FUNCTION</scope>
    <scope>INTERACTION WITH KLF4</scope>
    <scope>SUBCELLULAR LOCATION</scope>
    <scope>DEVELOPMENTAL STAGE</scope>
</reference>
<accession>E9Q6W4</accession>
<accession>Q4FZI6</accession>
<accession>Q9D7X0</accession>
<accession>Q9EPM0</accession>
<sequence>MSRRKAGRVPRRVDPDTDTDIEMPDLVMDVKPDLDLRSLAQGPWIARDMPISDVKRQLQTASRPLGAPSTCAPRMPLSSKSSDRQPWTDKHPDLLTCGRCGKIFPLGAIIAFMDHKKQGCQLLQVSDPISESKELKALSCLQCGRQYTSPWKLLCHAQWDHGLCIYQTQHLDTPEAPLLGLAEVAAAMSAVAVVAPVESKPPPVSSAARRSPTCDVCKKTLSSFSNLKVHMRSHTGERPYSCDQCSYACAQSSKLNRHKKTHRQLAPGSPSTSASSRGVSPAAPPEPAAYAAAPASTLPSQTVEKAGAAATAGVQEPGAPGSGAQGGPGFVGWGAPAKVERTDPVKIEKTAPRKSHGPGGKCEFCGKSFTNSSNLTVHRRSHTGERPYTCDQCPYACAQSSKLNRHRRTHGLGTGKTVKCPHCLVPFGLQATLDKHLRQKHPEMA</sequence>